<feature type="signal peptide" evidence="1">
    <location>
        <begin position="1"/>
        <end position="22"/>
    </location>
</feature>
<feature type="chain" id="PRO_0000424697" description="Exocrine gland-secreted peptide 1">
    <location>
        <begin position="23"/>
        <end position="102"/>
    </location>
</feature>
<feature type="site" description="Required for activity" evidence="5">
    <location>
        <position position="67"/>
    </location>
</feature>
<feature type="disulfide bond" evidence="5">
    <location>
        <begin position="63"/>
        <end position="95"/>
    </location>
</feature>
<feature type="mutagenesis site" description="Reduced neuron activity in the VNO." evidence="5">
    <original>R</original>
    <variation>E</variation>
    <location>
        <position position="56"/>
    </location>
</feature>
<feature type="mutagenesis site" description="Reduced neuron activity in the VNO." evidence="5">
    <original>R</original>
    <variation>E</variation>
    <location>
        <position position="60"/>
    </location>
</feature>
<feature type="mutagenesis site" description="No neuron activity in the VNO." evidence="5">
    <original>C</original>
    <variation>S</variation>
    <location>
        <position position="63"/>
    </location>
</feature>
<feature type="mutagenesis site" description="No neuron activity in the VNO and marked reduction in the accessory olfactory bulb." evidence="5">
    <original>E</original>
    <variation>R</variation>
    <variation>Q</variation>
    <location>
        <position position="67"/>
    </location>
</feature>
<feature type="mutagenesis site" description="Reduced neuron activity in the VNO." evidence="5">
    <original>D</original>
    <variation>R</variation>
    <location>
        <position position="69"/>
    </location>
</feature>
<feature type="mutagenesis site" description="Reduced neuron activity in the VNO." evidence="5">
    <original>K</original>
    <variation>E</variation>
    <location>
        <position position="70"/>
    </location>
</feature>
<feature type="mutagenesis site" description="Reduced neuron activity in the VNO." evidence="5">
    <original>D</original>
    <variation>R</variation>
    <location>
        <position position="88"/>
    </location>
</feature>
<feature type="mutagenesis site" description="Reduced neuron activity in the VNO." evidence="5">
    <original>R</original>
    <variation>E</variation>
    <location>
        <position position="92"/>
    </location>
</feature>
<feature type="mutagenesis site" description="No neuron activity in the VNO." evidence="5">
    <original>C</original>
    <variation>S</variation>
    <location>
        <position position="95"/>
    </location>
</feature>
<feature type="mutagenesis site" description="Reduced neuron activity in the VNO." evidence="5">
    <original>R</original>
    <variation>E</variation>
    <location>
        <position position="96"/>
    </location>
</feature>
<feature type="helix" evidence="12">
    <location>
        <begin position="53"/>
        <end position="58"/>
    </location>
</feature>
<feature type="helix" evidence="12">
    <location>
        <begin position="61"/>
        <end position="64"/>
    </location>
</feature>
<feature type="strand" evidence="12">
    <location>
        <begin position="65"/>
        <end position="67"/>
    </location>
</feature>
<feature type="helix" evidence="12">
    <location>
        <begin position="69"/>
        <end position="76"/>
    </location>
</feature>
<feature type="helix" evidence="12">
    <location>
        <begin position="88"/>
        <end position="91"/>
    </location>
</feature>
<name>ESP1_MOUSE</name>
<evidence type="ECO:0000255" key="1"/>
<evidence type="ECO:0000269" key="2">
    <source>
    </source>
</evidence>
<evidence type="ECO:0000269" key="3">
    <source>
    </source>
</evidence>
<evidence type="ECO:0000269" key="4">
    <source>
    </source>
</evidence>
<evidence type="ECO:0000269" key="5">
    <source>
    </source>
</evidence>
<evidence type="ECO:0000269" key="6">
    <source ref="3"/>
</evidence>
<evidence type="ECO:0000303" key="7">
    <source>
    </source>
</evidence>
<evidence type="ECO:0000305" key="8"/>
<evidence type="ECO:0000312" key="9">
    <source>
        <dbReference type="EMBL" id="BAE46402.1"/>
    </source>
</evidence>
<evidence type="ECO:0000312" key="10">
    <source>
        <dbReference type="MGI" id="MGI:3645915"/>
    </source>
</evidence>
<evidence type="ECO:0000312" key="11">
    <source>
        <dbReference type="PDB" id="2LMK"/>
    </source>
</evidence>
<evidence type="ECO:0007829" key="12">
    <source>
        <dbReference type="PDB" id="2LMK"/>
    </source>
</evidence>
<reference evidence="8 9" key="1">
    <citation type="journal article" date="2005" name="Nature">
        <title>Sex-specific peptides from exocrine glands stimulate mouse vomeronasal sensory neurons.</title>
        <authorList>
            <person name="Kimoto H."/>
            <person name="Haga S."/>
            <person name="Sato K."/>
            <person name="Touhara K."/>
        </authorList>
    </citation>
    <scope>NUCLEOTIDE SEQUENCE [MRNA]</scope>
    <scope>FUNCTION</scope>
    <scope>SUBCELLULAR LOCATION</scope>
    <scope>TISSUE SPECIFICITY</scope>
    <scope>DEVELOPMENTAL STAGE</scope>
    <scope>IDENTIFICATION BY MASS SPECTROMETRY</scope>
    <source>
        <strain evidence="9">BALB/cJ</strain>
        <tissue evidence="9">Lacrimal gland</tissue>
    </source>
</reference>
<reference key="2">
    <citation type="journal article" date="2009" name="PLoS Biol.">
        <title>Lineage-specific biology revealed by a finished genome assembly of the mouse.</title>
        <authorList>
            <person name="Church D.M."/>
            <person name="Goodstadt L."/>
            <person name="Hillier L.W."/>
            <person name="Zody M.C."/>
            <person name="Goldstein S."/>
            <person name="She X."/>
            <person name="Bult C.J."/>
            <person name="Agarwala R."/>
            <person name="Cherry J.L."/>
            <person name="DiCuccio M."/>
            <person name="Hlavina W."/>
            <person name="Kapustin Y."/>
            <person name="Meric P."/>
            <person name="Maglott D."/>
            <person name="Birtle Z."/>
            <person name="Marques A.C."/>
            <person name="Graves T."/>
            <person name="Zhou S."/>
            <person name="Teague B."/>
            <person name="Potamousis K."/>
            <person name="Churas C."/>
            <person name="Place M."/>
            <person name="Herschleb J."/>
            <person name="Runnheim R."/>
            <person name="Forrest D."/>
            <person name="Amos-Landgraf J."/>
            <person name="Schwartz D.C."/>
            <person name="Cheng Z."/>
            <person name="Lindblad-Toh K."/>
            <person name="Eichler E.E."/>
            <person name="Ponting C.P."/>
        </authorList>
    </citation>
    <scope>NUCLEOTIDE SEQUENCE [LARGE SCALE GENOMIC DNA]</scope>
    <source>
        <strain>C57BL/6J</strain>
    </source>
</reference>
<reference evidence="8" key="3">
    <citation type="journal article" date="2007" name="Pure Appl. Chem.">
        <title>Molecular characterization of vomeronasal sensory neurons responding to a male-specific peptide in tear fluid: sexual communication in mice.</title>
        <authorList>
            <person name="Haga S."/>
            <person name="Kimoto H."/>
            <person name="Touhara K."/>
        </authorList>
    </citation>
    <scope>PROTEIN SEQUENCE OF 36-55</scope>
    <scope>FUNCTION</scope>
    <scope>IDENTIFICATION BY MASS SPECTROMETRY</scope>
    <source>
        <strain evidence="6">BALB/cJ</strain>
        <tissue evidence="6">Lacrimal gland</tissue>
    </source>
</reference>
<reference evidence="8" key="4">
    <citation type="journal article" date="2007" name="Curr. Biol.">
        <title>Sex- and strain-specific expression and vomeronasal activity of mouse ESP family peptides.</title>
        <authorList>
            <person name="Kimoto H."/>
            <person name="Sato K."/>
            <person name="Nodari F."/>
            <person name="Haga S."/>
            <person name="Holy T.E."/>
            <person name="Touhara K."/>
        </authorList>
    </citation>
    <scope>FUNCTION</scope>
    <scope>DEVELOPMENTAL STAGE</scope>
</reference>
<reference evidence="8" key="5">
    <citation type="journal article" date="2010" name="Nature">
        <title>The male mouse pheromone ESP1 enhances female sexual receptive behaviour through a specific vomeronasal receptor.</title>
        <authorList>
            <person name="Haga S."/>
            <person name="Hattori T."/>
            <person name="Sato T."/>
            <person name="Sato K."/>
            <person name="Matsuda S."/>
            <person name="Kobayakawa R."/>
            <person name="Sakano H."/>
            <person name="Yoshihara Y."/>
            <person name="Kikusui T."/>
            <person name="Touhara K."/>
        </authorList>
    </citation>
    <scope>FUNCTION</scope>
    <scope>SUBCELLULAR LOCATION</scope>
    <scope>POLYMORPHISM</scope>
</reference>
<reference evidence="8 11" key="6">
    <citation type="journal article" date="2013" name="J. Biol. Chem.">
        <title>Structure of the mouse sex peptide pheromone ESP1 reveals a molecular basis for specific binding to the class C G-protein-coupled vomeronasal receptor.</title>
        <authorList>
            <person name="Yoshinaga S."/>
            <person name="Sato T."/>
            <person name="Hirakane M."/>
            <person name="Esaki K."/>
            <person name="Hamaguchi T."/>
            <person name="Haga-Yamanaka S."/>
            <person name="Tsunoda M."/>
            <person name="Kimoto H."/>
            <person name="Shimada I."/>
            <person name="Touhara K."/>
            <person name="Terasawa H."/>
        </authorList>
    </citation>
    <scope>STRUCTURE BY NMR OF 48-102</scope>
    <scope>SUBUNIT</scope>
    <scope>INTERACTION WITH VMN2R116</scope>
    <scope>DISULFIDE BOND</scope>
    <scope>MUTAGENESIS OF ARG-56; ARG-60; CYS-63; GLU-67; ASP-69; LYS-70; ASP-88; ARG-92; CYS-95 AND ARG-96</scope>
    <source>
        <strain evidence="5">BALB/cJ</strain>
    </source>
</reference>
<proteinExistence type="evidence at protein level"/>
<keyword id="KW-0002">3D-structure</keyword>
<keyword id="KW-0085">Behavior</keyword>
<keyword id="KW-0903">Direct protein sequencing</keyword>
<keyword id="KW-1015">Disulfide bond</keyword>
<keyword id="KW-0588">Pheromone</keyword>
<keyword id="KW-1185">Reference proteome</keyword>
<keyword id="KW-0964">Secreted</keyword>
<keyword id="KW-0732">Signal</keyword>
<sequence length="102" mass="11346">MTSLPVLLFLIILLLPSMITEGRVLTQTGKEATIFADQKTNHEADLKNPDPQEVQRALARILCALGELDKLVKDQANAGQQEFKLPKDFTGRSKCRSLGRIK</sequence>
<organism>
    <name type="scientific">Mus musculus</name>
    <name type="common">Mouse</name>
    <dbReference type="NCBI Taxonomy" id="10090"/>
    <lineage>
        <taxon>Eukaryota</taxon>
        <taxon>Metazoa</taxon>
        <taxon>Chordata</taxon>
        <taxon>Craniata</taxon>
        <taxon>Vertebrata</taxon>
        <taxon>Euteleostomi</taxon>
        <taxon>Mammalia</taxon>
        <taxon>Eutheria</taxon>
        <taxon>Euarchontoglires</taxon>
        <taxon>Glires</taxon>
        <taxon>Rodentia</taxon>
        <taxon>Myomorpha</taxon>
        <taxon>Muroidea</taxon>
        <taxon>Muridae</taxon>
        <taxon>Murinae</taxon>
        <taxon>Mus</taxon>
        <taxon>Mus</taxon>
    </lineage>
</organism>
<comment type="function">
    <text evidence="2 3 4 5 6">Male-specific phermone which is recognized by the Vmn2r116/V2rp5 receptor in the vomeronasal organ (VNO) and enhances female sexual receptive behavior (lordosis) upon male mounting, resulting in successful copulation.</text>
</comment>
<comment type="subunit">
    <text evidence="7 8">Monomer.</text>
</comment>
<comment type="subcellular location">
    <subcellularLocation>
        <location evidence="2 4">Secreted</location>
    </subcellularLocation>
    <text evidence="2 4">Secreted by the extraorbital lacrimal gland into tears.</text>
</comment>
<comment type="tissue specificity">
    <text evidence="2">Expressed in the extraorbital lacrimal gland from where it is secreted into tears.</text>
</comment>
<comment type="developmental stage">
    <text evidence="2 3">Expression is observed after 4 weeks of age in males only. Not expressed in females or in males castrated at 3 weeks of age whereas expression is not down-regulated in castrated adult males.</text>
</comment>
<comment type="polymorphism">
    <text evidence="4">Expressed at very low levels in most inbred strains with high levels detected only in strains BALB/c and DBA/2. Expressed at high levels in a number of wild mouse-derived strains.</text>
</comment>
<comment type="similarity">
    <text evidence="8">Belongs to the exocrine gland-secreted peptide family.</text>
</comment>
<gene>
    <name evidence="9" type="primary">Esp1</name>
    <name evidence="10" type="synonym">Gm6084</name>
</gene>
<protein>
    <recommendedName>
        <fullName>Exocrine gland-secreted peptide 1</fullName>
    </recommendedName>
</protein>
<accession>Q3LHH8</accession>
<dbReference type="EMBL" id="AB194091">
    <property type="protein sequence ID" value="BAE46402.1"/>
    <property type="molecule type" value="mRNA"/>
</dbReference>
<dbReference type="EMBL" id="AC135084">
    <property type="status" value="NOT_ANNOTATED_CDS"/>
    <property type="molecule type" value="Genomic_DNA"/>
</dbReference>
<dbReference type="CCDS" id="CCDS28785.1"/>
<dbReference type="RefSeq" id="NP_001033589.1">
    <property type="nucleotide sequence ID" value="NM_001038500.2"/>
</dbReference>
<dbReference type="PDB" id="2LMK">
    <property type="method" value="NMR"/>
    <property type="chains" value="A=48-102"/>
</dbReference>
<dbReference type="PDBsum" id="2LMK"/>
<dbReference type="SMR" id="Q3LHH8"/>
<dbReference type="FunCoup" id="Q3LHH8">
    <property type="interactions" value="485"/>
</dbReference>
<dbReference type="IntAct" id="Q3LHH8">
    <property type="interactions" value="1"/>
</dbReference>
<dbReference type="STRING" id="10090.ENSMUSP00000123886"/>
<dbReference type="PaxDb" id="10090-ENSMUSP00000123886"/>
<dbReference type="DNASU" id="619517"/>
<dbReference type="Ensembl" id="ENSMUST00000161110.2">
    <property type="protein sequence ID" value="ENSMUSP00000123886.2"/>
    <property type="gene ID" value="ENSMUSG00000073396.6"/>
</dbReference>
<dbReference type="GeneID" id="619517"/>
<dbReference type="KEGG" id="mmu:619517"/>
<dbReference type="UCSC" id="uc008coi.1">
    <property type="organism name" value="mouse"/>
</dbReference>
<dbReference type="AGR" id="MGI:3645915"/>
<dbReference type="CTD" id="619517"/>
<dbReference type="MGI" id="MGI:3645915">
    <property type="gene designation" value="Esp1"/>
</dbReference>
<dbReference type="VEuPathDB" id="HostDB:ENSMUSG00000073396"/>
<dbReference type="GeneTree" id="ENSGT00840000130532"/>
<dbReference type="HOGENOM" id="CLU_146128_0_0_1"/>
<dbReference type="InParanoid" id="Q3LHH8"/>
<dbReference type="OrthoDB" id="9619688at2759"/>
<dbReference type="PhylomeDB" id="Q3LHH8"/>
<dbReference type="BioGRID-ORCS" id="619517">
    <property type="hits" value="1 hit in 76 CRISPR screens"/>
</dbReference>
<dbReference type="ChiTaRS" id="Espl1">
    <property type="organism name" value="mouse"/>
</dbReference>
<dbReference type="PRO" id="PR:Q3LHH8"/>
<dbReference type="Proteomes" id="UP000000589">
    <property type="component" value="Chromosome 17"/>
</dbReference>
<dbReference type="RNAct" id="Q3LHH8">
    <property type="molecule type" value="protein"/>
</dbReference>
<dbReference type="ExpressionAtlas" id="Q3LHH8">
    <property type="expression patterns" value="differential"/>
</dbReference>
<dbReference type="GO" id="GO:0005615">
    <property type="term" value="C:extracellular space"/>
    <property type="evidence" value="ECO:0000314"/>
    <property type="project" value="MGI"/>
</dbReference>
<dbReference type="GO" id="GO:0005186">
    <property type="term" value="F:pheromone activity"/>
    <property type="evidence" value="ECO:0000314"/>
    <property type="project" value="MGI"/>
</dbReference>
<dbReference type="GO" id="GO:0045925">
    <property type="term" value="P:positive regulation of female receptivity"/>
    <property type="evidence" value="ECO:0000314"/>
    <property type="project" value="MGI"/>
</dbReference>
<dbReference type="CDD" id="cd14248">
    <property type="entry name" value="ESP"/>
    <property type="match status" value="1"/>
</dbReference>
<dbReference type="Gene3D" id="1.20.50.60">
    <property type="entry name" value="ESP1, core domain"/>
    <property type="match status" value="1"/>
</dbReference>
<dbReference type="InterPro" id="IPR032253">
    <property type="entry name" value="Esp1/Esp22"/>
</dbReference>
<dbReference type="InterPro" id="IPR043126">
    <property type="entry name" value="Esp1_core"/>
</dbReference>
<dbReference type="Pfam" id="PF16590">
    <property type="entry name" value="ESP"/>
    <property type="match status" value="1"/>
</dbReference>